<gene>
    <name type="primary">lac1</name>
    <name type="synonym">mug83</name>
    <name type="ORF">SPBC3E7.15c</name>
    <name type="ORF">SPBC4F6.02c</name>
</gene>
<reference key="1">
    <citation type="journal article" date="2002" name="Nature">
        <title>The genome sequence of Schizosaccharomyces pombe.</title>
        <authorList>
            <person name="Wood V."/>
            <person name="Gwilliam R."/>
            <person name="Rajandream M.A."/>
            <person name="Lyne M.H."/>
            <person name="Lyne R."/>
            <person name="Stewart A."/>
            <person name="Sgouros J.G."/>
            <person name="Peat N."/>
            <person name="Hayles J."/>
            <person name="Baker S.G."/>
            <person name="Basham D."/>
            <person name="Bowman S."/>
            <person name="Brooks K."/>
            <person name="Brown D."/>
            <person name="Brown S."/>
            <person name="Chillingworth T."/>
            <person name="Churcher C.M."/>
            <person name="Collins M."/>
            <person name="Connor R."/>
            <person name="Cronin A."/>
            <person name="Davis P."/>
            <person name="Feltwell T."/>
            <person name="Fraser A."/>
            <person name="Gentles S."/>
            <person name="Goble A."/>
            <person name="Hamlin N."/>
            <person name="Harris D.E."/>
            <person name="Hidalgo J."/>
            <person name="Hodgson G."/>
            <person name="Holroyd S."/>
            <person name="Hornsby T."/>
            <person name="Howarth S."/>
            <person name="Huckle E.J."/>
            <person name="Hunt S."/>
            <person name="Jagels K."/>
            <person name="James K.D."/>
            <person name="Jones L."/>
            <person name="Jones M."/>
            <person name="Leather S."/>
            <person name="McDonald S."/>
            <person name="McLean J."/>
            <person name="Mooney P."/>
            <person name="Moule S."/>
            <person name="Mungall K.L."/>
            <person name="Murphy L.D."/>
            <person name="Niblett D."/>
            <person name="Odell C."/>
            <person name="Oliver K."/>
            <person name="O'Neil S."/>
            <person name="Pearson D."/>
            <person name="Quail M.A."/>
            <person name="Rabbinowitsch E."/>
            <person name="Rutherford K.M."/>
            <person name="Rutter S."/>
            <person name="Saunders D."/>
            <person name="Seeger K."/>
            <person name="Sharp S."/>
            <person name="Skelton J."/>
            <person name="Simmonds M.N."/>
            <person name="Squares R."/>
            <person name="Squares S."/>
            <person name="Stevens K."/>
            <person name="Taylor K."/>
            <person name="Taylor R.G."/>
            <person name="Tivey A."/>
            <person name="Walsh S.V."/>
            <person name="Warren T."/>
            <person name="Whitehead S."/>
            <person name="Woodward J.R."/>
            <person name="Volckaert G."/>
            <person name="Aert R."/>
            <person name="Robben J."/>
            <person name="Grymonprez B."/>
            <person name="Weltjens I."/>
            <person name="Vanstreels E."/>
            <person name="Rieger M."/>
            <person name="Schaefer M."/>
            <person name="Mueller-Auer S."/>
            <person name="Gabel C."/>
            <person name="Fuchs M."/>
            <person name="Duesterhoeft A."/>
            <person name="Fritzc C."/>
            <person name="Holzer E."/>
            <person name="Moestl D."/>
            <person name="Hilbert H."/>
            <person name="Borzym K."/>
            <person name="Langer I."/>
            <person name="Beck A."/>
            <person name="Lehrach H."/>
            <person name="Reinhardt R."/>
            <person name="Pohl T.M."/>
            <person name="Eger P."/>
            <person name="Zimmermann W."/>
            <person name="Wedler H."/>
            <person name="Wambutt R."/>
            <person name="Purnelle B."/>
            <person name="Goffeau A."/>
            <person name="Cadieu E."/>
            <person name="Dreano S."/>
            <person name="Gloux S."/>
            <person name="Lelaure V."/>
            <person name="Mottier S."/>
            <person name="Galibert F."/>
            <person name="Aves S.J."/>
            <person name="Xiang Z."/>
            <person name="Hunt C."/>
            <person name="Moore K."/>
            <person name="Hurst S.M."/>
            <person name="Lucas M."/>
            <person name="Rochet M."/>
            <person name="Gaillardin C."/>
            <person name="Tallada V.A."/>
            <person name="Garzon A."/>
            <person name="Thode G."/>
            <person name="Daga R.R."/>
            <person name="Cruzado L."/>
            <person name="Jimenez J."/>
            <person name="Sanchez M."/>
            <person name="del Rey F."/>
            <person name="Benito J."/>
            <person name="Dominguez A."/>
            <person name="Revuelta J.L."/>
            <person name="Moreno S."/>
            <person name="Armstrong J."/>
            <person name="Forsburg S.L."/>
            <person name="Cerutti L."/>
            <person name="Lowe T."/>
            <person name="McCombie W.R."/>
            <person name="Paulsen I."/>
            <person name="Potashkin J."/>
            <person name="Shpakovski G.V."/>
            <person name="Ussery D."/>
            <person name="Barrell B.G."/>
            <person name="Nurse P."/>
        </authorList>
    </citation>
    <scope>NUCLEOTIDE SEQUENCE [LARGE SCALE GENOMIC DNA]</scope>
    <source>
        <strain>972 / ATCC 24843</strain>
    </source>
</reference>
<reference key="2">
    <citation type="journal article" date="2005" name="Curr. Biol.">
        <title>A large-scale screen in S. pombe identifies seven novel genes required for critical meiotic events.</title>
        <authorList>
            <person name="Martin-Castellanos C."/>
            <person name="Blanco M."/>
            <person name="Rozalen A.E."/>
            <person name="Perez-Hidalgo L."/>
            <person name="Garcia A.I."/>
            <person name="Conde F."/>
            <person name="Mata J."/>
            <person name="Ellermeier C."/>
            <person name="Davis L."/>
            <person name="San-Segundo P."/>
            <person name="Smith G.R."/>
            <person name="Moreno S."/>
        </authorList>
    </citation>
    <scope>FUNCTION IN MEIOSIS</scope>
</reference>
<reference key="3">
    <citation type="journal article" date="2008" name="J. Proteome Res.">
        <title>Phosphoproteome analysis of fission yeast.</title>
        <authorList>
            <person name="Wilson-Grady J.T."/>
            <person name="Villen J."/>
            <person name="Gygi S.P."/>
        </authorList>
    </citation>
    <scope>PHOSPHORYLATION [LARGE SCALE ANALYSIS] AT SER-41; THR-361 AND SER-366</scope>
    <scope>IDENTIFICATION BY MASS SPECTROMETRY</scope>
</reference>
<keyword id="KW-0256">Endoplasmic reticulum</keyword>
<keyword id="KW-0325">Glycoprotein</keyword>
<keyword id="KW-0444">Lipid biosynthesis</keyword>
<keyword id="KW-0443">Lipid metabolism</keyword>
<keyword id="KW-0469">Meiosis</keyword>
<keyword id="KW-0472">Membrane</keyword>
<keyword id="KW-0597">Phosphoprotein</keyword>
<keyword id="KW-1185">Reference proteome</keyword>
<keyword id="KW-0808">Transferase</keyword>
<keyword id="KW-0812">Transmembrane</keyword>
<keyword id="KW-1133">Transmembrane helix</keyword>
<sequence length="384" mass="45336">MGNNTSRRSQSQKFKNIPSISAGSFSTMPVQHRGRRRRSKSIVGRAAQNAVLRSKEKTWIVPLILLTLLVGWYFVNPNGYIKYGIFLSYPIPGTNPAQYGKGRLDIAFCLFYALFFTFCREFIMQEIIARIGRHFNIRAPAKLRRFEEQAYTCLYFTVMGSWGLYVMKQTPMWFFNTDAFWEEYPHFYHVGSFKAFYLIEAAYWIQQALVLILQLEKPRKDFKELVVHHIITLLLIGLSYYFHFTWIGLAVFITMDTSDIWLALSKCLNYVNTVIVYPIFVIFVFVWIYMRHYLNFKIMWAVWGTMRTINSFDLDWAAEQYKCWISRDVTLILLTALQLVNIYWLILILRIGYRAFTTNDTHDERSEDEDEEVSDEKSSAKKND</sequence>
<dbReference type="EC" id="2.3.1.24"/>
<dbReference type="EMBL" id="CU329671">
    <property type="protein sequence ID" value="CAA19018.2"/>
    <property type="molecule type" value="Genomic_DNA"/>
</dbReference>
<dbReference type="PIR" id="T40389">
    <property type="entry name" value="T40389"/>
</dbReference>
<dbReference type="RefSeq" id="NP_596102.1">
    <property type="nucleotide sequence ID" value="NM_001022018.2"/>
</dbReference>
<dbReference type="SMR" id="O59735"/>
<dbReference type="BioGRID" id="276994">
    <property type="interactions" value="8"/>
</dbReference>
<dbReference type="FunCoup" id="O59735">
    <property type="interactions" value="316"/>
</dbReference>
<dbReference type="STRING" id="284812.O59735"/>
<dbReference type="GlyCosmos" id="O59735">
    <property type="glycosylation" value="1 site, No reported glycans"/>
</dbReference>
<dbReference type="iPTMnet" id="O59735"/>
<dbReference type="PaxDb" id="4896-SPBC3E7.15c.1"/>
<dbReference type="EnsemblFungi" id="SPBC3E7.15c.1">
    <property type="protein sequence ID" value="SPBC3E7.15c.1:pep"/>
    <property type="gene ID" value="SPBC3E7.15c"/>
</dbReference>
<dbReference type="GeneID" id="2540466"/>
<dbReference type="KEGG" id="spo:2540466"/>
<dbReference type="PomBase" id="SPBC3E7.15c">
    <property type="gene designation" value="lac1"/>
</dbReference>
<dbReference type="VEuPathDB" id="FungiDB:SPBC3E7.15c"/>
<dbReference type="eggNOG" id="KOG1607">
    <property type="taxonomic scope" value="Eukaryota"/>
</dbReference>
<dbReference type="HOGENOM" id="CLU_028277_4_0_1"/>
<dbReference type="InParanoid" id="O59735"/>
<dbReference type="OMA" id="LCRLCML"/>
<dbReference type="PhylomeDB" id="O59735"/>
<dbReference type="Reactome" id="R-SPO-1660661">
    <property type="pathway name" value="Sphingolipid de novo biosynthesis"/>
</dbReference>
<dbReference type="PRO" id="PR:O59735"/>
<dbReference type="Proteomes" id="UP000002485">
    <property type="component" value="Chromosome II"/>
</dbReference>
<dbReference type="GO" id="GO:0005783">
    <property type="term" value="C:endoplasmic reticulum"/>
    <property type="evidence" value="ECO:0000269"/>
    <property type="project" value="PomBase"/>
</dbReference>
<dbReference type="GO" id="GO:0005789">
    <property type="term" value="C:endoplasmic reticulum membrane"/>
    <property type="evidence" value="ECO:0000303"/>
    <property type="project" value="PomBase"/>
</dbReference>
<dbReference type="GO" id="GO:0050291">
    <property type="term" value="F:sphingosine N-acyltransferase activity"/>
    <property type="evidence" value="ECO:0000318"/>
    <property type="project" value="GO_Central"/>
</dbReference>
<dbReference type="GO" id="GO:0046513">
    <property type="term" value="P:ceramide biosynthetic process"/>
    <property type="evidence" value="ECO:0000269"/>
    <property type="project" value="PomBase"/>
</dbReference>
<dbReference type="GO" id="GO:0051321">
    <property type="term" value="P:meiotic cell cycle"/>
    <property type="evidence" value="ECO:0007669"/>
    <property type="project" value="UniProtKB-KW"/>
</dbReference>
<dbReference type="InterPro" id="IPR016439">
    <property type="entry name" value="Lag1/Lac1-like"/>
</dbReference>
<dbReference type="InterPro" id="IPR006634">
    <property type="entry name" value="TLC-dom"/>
</dbReference>
<dbReference type="PANTHER" id="PTHR12560:SF11">
    <property type="entry name" value="CERAMIDE SYNTHASE LAC1-RELATED"/>
    <property type="match status" value="1"/>
</dbReference>
<dbReference type="PANTHER" id="PTHR12560">
    <property type="entry name" value="LONGEVITY ASSURANCE FACTOR 1 LAG1"/>
    <property type="match status" value="1"/>
</dbReference>
<dbReference type="Pfam" id="PF03798">
    <property type="entry name" value="TRAM_LAG1_CLN8"/>
    <property type="match status" value="1"/>
</dbReference>
<dbReference type="PIRSF" id="PIRSF005225">
    <property type="entry name" value="LAG1_LAC1"/>
    <property type="match status" value="1"/>
</dbReference>
<dbReference type="SMART" id="SM00724">
    <property type="entry name" value="TLC"/>
    <property type="match status" value="1"/>
</dbReference>
<dbReference type="PROSITE" id="PS50922">
    <property type="entry name" value="TLC"/>
    <property type="match status" value="1"/>
</dbReference>
<protein>
    <recommendedName>
        <fullName>Sphingosine N-acyltransferase lac1</fullName>
        <ecNumber>2.3.1.24</ecNumber>
    </recommendedName>
    <alternativeName>
        <fullName>Meiotically up-regulated gene 83 protein</fullName>
    </alternativeName>
</protein>
<feature type="chain" id="PRO_0000185534" description="Sphingosine N-acyltransferase lac1">
    <location>
        <begin position="1"/>
        <end position="384"/>
    </location>
</feature>
<feature type="topological domain" description="Cytoplasmic" evidence="1">
    <location>
        <begin position="1"/>
        <end position="58"/>
    </location>
</feature>
<feature type="transmembrane region" description="Helical" evidence="2">
    <location>
        <begin position="59"/>
        <end position="79"/>
    </location>
</feature>
<feature type="topological domain" description="Lumenal" evidence="1">
    <location>
        <begin position="80"/>
        <end position="103"/>
    </location>
</feature>
<feature type="transmembrane region" description="Helical" evidence="2">
    <location>
        <begin position="104"/>
        <end position="124"/>
    </location>
</feature>
<feature type="topological domain" description="Cytoplasmic" evidence="1">
    <location>
        <begin position="125"/>
        <end position="154"/>
    </location>
</feature>
<feature type="transmembrane region" description="Helical" evidence="2">
    <location>
        <begin position="155"/>
        <end position="175"/>
    </location>
</feature>
<feature type="topological domain" description="Lumenal" evidence="1">
    <location>
        <begin position="176"/>
        <end position="194"/>
    </location>
</feature>
<feature type="transmembrane region" description="Helical" evidence="2">
    <location>
        <begin position="195"/>
        <end position="215"/>
    </location>
</feature>
<feature type="topological domain" description="Cytoplasmic" evidence="1">
    <location>
        <begin position="216"/>
        <end position="232"/>
    </location>
</feature>
<feature type="transmembrane region" description="Helical" evidence="2">
    <location>
        <begin position="233"/>
        <end position="253"/>
    </location>
</feature>
<feature type="topological domain" description="Lumenal" evidence="1">
    <location>
        <begin position="254"/>
        <end position="269"/>
    </location>
</feature>
<feature type="transmembrane region" description="Helical" evidence="2">
    <location>
        <begin position="270"/>
        <end position="290"/>
    </location>
</feature>
<feature type="topological domain" description="Cytoplasmic" evidence="1">
    <location>
        <begin position="291"/>
        <end position="328"/>
    </location>
</feature>
<feature type="transmembrane region" description="Helical" evidence="2">
    <location>
        <begin position="329"/>
        <end position="349"/>
    </location>
</feature>
<feature type="topological domain" description="Lumenal" evidence="1">
    <location>
        <begin position="350"/>
        <end position="384"/>
    </location>
</feature>
<feature type="domain" description="TLC" evidence="3">
    <location>
        <begin position="141"/>
        <end position="357"/>
    </location>
</feature>
<feature type="region of interest" description="Disordered" evidence="4">
    <location>
        <begin position="19"/>
        <end position="42"/>
    </location>
</feature>
<feature type="region of interest" description="Disordered" evidence="4">
    <location>
        <begin position="362"/>
        <end position="384"/>
    </location>
</feature>
<feature type="compositionally biased region" description="Polar residues" evidence="4">
    <location>
        <begin position="19"/>
        <end position="29"/>
    </location>
</feature>
<feature type="compositionally biased region" description="Basic and acidic residues" evidence="4">
    <location>
        <begin position="375"/>
        <end position="384"/>
    </location>
</feature>
<feature type="modified residue" description="Phosphoserine" evidence="6">
    <location>
        <position position="41"/>
    </location>
</feature>
<feature type="modified residue" description="Phosphothreonine" evidence="6">
    <location>
        <position position="361"/>
    </location>
</feature>
<feature type="modified residue" description="Phosphoserine" evidence="6">
    <location>
        <position position="366"/>
    </location>
</feature>
<feature type="glycosylation site" description="N-linked (GlcNAc...) asparagine" evidence="2">
    <location>
        <position position="359"/>
    </location>
</feature>
<accession>O59735</accession>
<organism>
    <name type="scientific">Schizosaccharomyces pombe (strain 972 / ATCC 24843)</name>
    <name type="common">Fission yeast</name>
    <dbReference type="NCBI Taxonomy" id="284812"/>
    <lineage>
        <taxon>Eukaryota</taxon>
        <taxon>Fungi</taxon>
        <taxon>Dikarya</taxon>
        <taxon>Ascomycota</taxon>
        <taxon>Taphrinomycotina</taxon>
        <taxon>Schizosaccharomycetes</taxon>
        <taxon>Schizosaccharomycetales</taxon>
        <taxon>Schizosaccharomycetaceae</taxon>
        <taxon>Schizosaccharomyces</taxon>
    </lineage>
</organism>
<evidence type="ECO:0000250" key="1"/>
<evidence type="ECO:0000255" key="2"/>
<evidence type="ECO:0000255" key="3">
    <source>
        <dbReference type="PROSITE-ProRule" id="PRU00205"/>
    </source>
</evidence>
<evidence type="ECO:0000256" key="4">
    <source>
        <dbReference type="SAM" id="MobiDB-lite"/>
    </source>
</evidence>
<evidence type="ECO:0000269" key="5">
    <source>
    </source>
</evidence>
<evidence type="ECO:0000269" key="6">
    <source>
    </source>
</evidence>
<evidence type="ECO:0000305" key="7"/>
<name>LAC1_SCHPO</name>
<comment type="function">
    <text evidence="1 5">Component of the ceramide synthase complex required for C26-CoA-dependent ceramide synthesis. Facilitates ER-to-Golgi transport of GPI-anchored proteins (By similarity). Has a role in meiosis.</text>
</comment>
<comment type="catalytic activity">
    <reaction>
        <text>a fatty acyl-CoA + sphing-4-enine = an N-acylsphing-4-enine + CoA + H(+)</text>
        <dbReference type="Rhea" id="RHEA:23768"/>
        <dbReference type="ChEBI" id="CHEBI:15378"/>
        <dbReference type="ChEBI" id="CHEBI:52639"/>
        <dbReference type="ChEBI" id="CHEBI:57287"/>
        <dbReference type="ChEBI" id="CHEBI:57756"/>
        <dbReference type="ChEBI" id="CHEBI:77636"/>
        <dbReference type="EC" id="2.3.1.24"/>
    </reaction>
</comment>
<comment type="subcellular location">
    <subcellularLocation>
        <location evidence="1">Endoplasmic reticulum membrane</location>
        <topology evidence="1">Multi-pass membrane protein</topology>
    </subcellularLocation>
</comment>
<comment type="similarity">
    <text evidence="7">Belongs to the sphingosine N-acyltransferase family.</text>
</comment>
<proteinExistence type="evidence at protein level"/>